<sequence length="930" mass="100060">MISVDRLSEEQALGMKEQEWAGPEALCPGWQEEEVSDGEGPEDSGHPDPTAHAYEVLQHTLRLEGMPLTIDRTGQPRTGSGPLDMTVCVLGSPTAFLPVLLEGGTRYPGAMVLCLAPAWASRVPSETSPGSWSLLLSRGVSFEAGGCTALEEFVPPRRATYVTGTFGSEGSWEGELARDLDCPTGGSALLTRWLEDPLLSRWLLSARAGLPVPPTLAFITGLWETLPEEPEPPGVHLVRLQDPQGQESLVRDEVGAFLEGSSMQPYDQVAVRLSGWRWRGTDPHSTHRKVEGEAVAQAVAALLKGLREEESILLEALVPTARLPTLPPRSAAPRLPMALRICTVVCRSWGDRPQLCQVACTAGRAEVPVRHGSALPLGLDSSLRQWGLADAAQRQALAGQLREAAEAAMAALLAAEGELSPAQRGGARAHTDVLGVDFLLACVDGTLELVALSANCLRCLETCLLAEGMGHDVGQPAGDVPRLLAECLLHRAQCHLVEGKDILLIGAGGVSKSFVWEAAREYGLRIHLVESDPEHFAAGLVETFLPYDSREHRRDEEHAERVLEMLRARGLRPDACLSYWDDCVVLTALLCQRLGLPGCPPAAVRLAKQKSRTHQHLQRCRRGRPPPAAFSVPCRRLRSHGDVERAAGAVPFPAVAKLEFGAGAVGVRLVENAGQCHAHAAQLWHDLRADADHPGIGLGWGNAMLLMEYVPGTEHDVDLVLFEGRLLGAWVSDNGPTRVPTFLETAATLPSCLPADRQAQLVRAALRCCRACGLRHGVFNVELKLSPAGPRLLEINPRMGGFYLRDWMRAVYGPDLLLAAVLLALGLPPVLPSRPAPRQQLAGVMCLASEHGRALRGGVMAALQGLQRRGLVRLNPLFEEAGGRYEEPCLSVACAGDGPAEACGRLLGLCQALGIDSPQYPVGHFLSHFK</sequence>
<reference evidence="5 7" key="1">
    <citation type="journal article" date="2010" name="J. Biol. Chem.">
        <title>Molecular identification of carnosine synthase as ATP-grasp domain-containing protein 1 (ATPGD1).</title>
        <authorList>
            <person name="Drozak J."/>
            <person name="Veiga-da-Cunha M."/>
            <person name="Vertommen D."/>
            <person name="Stroobant V."/>
            <person name="Van Schaftingen E."/>
        </authorList>
    </citation>
    <scope>NUCLEOTIDE SEQUENCE [MRNA]</scope>
    <scope>IDENTIFICATION BY MASS SPECTROMETRY</scope>
    <scope>FUNCTION</scope>
    <scope>CATALYTIC ACTIVITY</scope>
    <scope>BIOPHYSICOCHEMICAL PROPERTIES</scope>
    <scope>SUBUNIT</scope>
    <source>
        <tissue evidence="7">Pectoralis muscle</tissue>
    </source>
</reference>
<name>CRNS1_CHICK</name>
<evidence type="ECO:0000250" key="1">
    <source>
        <dbReference type="UniProtKB" id="A5YM72"/>
    </source>
</evidence>
<evidence type="ECO:0000255" key="2">
    <source>
        <dbReference type="PROSITE-ProRule" id="PRU00409"/>
    </source>
</evidence>
<evidence type="ECO:0000256" key="3">
    <source>
        <dbReference type="SAM" id="MobiDB-lite"/>
    </source>
</evidence>
<evidence type="ECO:0000269" key="4">
    <source>
    </source>
</evidence>
<evidence type="ECO:0000305" key="5"/>
<evidence type="ECO:0000305" key="6">
    <source>
    </source>
</evidence>
<evidence type="ECO:0000312" key="7">
    <source>
        <dbReference type="EMBL" id="ADB91406.1"/>
    </source>
</evidence>
<proteinExistence type="evidence at protein level"/>
<comment type="function">
    <text evidence="4">Catalyzes the synthesis of carnosine and homocarnosine. Carnosine is synthesized more efficiently than homocarnosine.</text>
</comment>
<comment type="catalytic activity">
    <reaction evidence="4">
        <text>beta-alanine + L-histidine + ATP = carnosine + ADP + phosphate + H(+)</text>
        <dbReference type="Rhea" id="RHEA:19297"/>
        <dbReference type="ChEBI" id="CHEBI:15378"/>
        <dbReference type="ChEBI" id="CHEBI:30616"/>
        <dbReference type="ChEBI" id="CHEBI:43474"/>
        <dbReference type="ChEBI" id="CHEBI:57485"/>
        <dbReference type="ChEBI" id="CHEBI:57595"/>
        <dbReference type="ChEBI" id="CHEBI:57966"/>
        <dbReference type="ChEBI" id="CHEBI:456216"/>
        <dbReference type="EC" id="6.3.2.11"/>
    </reaction>
    <physiologicalReaction direction="left-to-right" evidence="6">
        <dbReference type="Rhea" id="RHEA:19298"/>
    </physiologicalReaction>
</comment>
<comment type="catalytic activity">
    <reaction evidence="4">
        <text>4-aminobutanoate + L-histidine + ATP = L-homocarnosine + ADP + phosphate + H(+)</text>
        <dbReference type="Rhea" id="RHEA:59568"/>
        <dbReference type="ChEBI" id="CHEBI:15378"/>
        <dbReference type="ChEBI" id="CHEBI:30616"/>
        <dbReference type="ChEBI" id="CHEBI:43474"/>
        <dbReference type="ChEBI" id="CHEBI:57595"/>
        <dbReference type="ChEBI" id="CHEBI:59888"/>
        <dbReference type="ChEBI" id="CHEBI:143075"/>
        <dbReference type="ChEBI" id="CHEBI:456216"/>
    </reaction>
    <physiologicalReaction direction="left-to-right" evidence="6">
        <dbReference type="Rhea" id="RHEA:59569"/>
    </physiologicalReaction>
</comment>
<comment type="cofactor">
    <cofactor evidence="2">
        <name>Mg(2+)</name>
        <dbReference type="ChEBI" id="CHEBI:18420"/>
    </cofactor>
    <cofactor evidence="2">
        <name>Mn(2+)</name>
        <dbReference type="ChEBI" id="CHEBI:29035"/>
    </cofactor>
    <text evidence="2">Binds 2 magnesium or manganese ions per subunit.</text>
</comment>
<comment type="biophysicochemical properties">
    <kinetics>
        <KM evidence="4">0.033 mM for beta-alanine</KM>
        <KM evidence="4">0.35 mM for 4-aminobutanoate</KM>
        <KM evidence="4">0.1 mM for L-histidine</KM>
        <KM evidence="4">1.42 mM for L-lysine</KM>
        <KM evidence="4">1.62 mM for L-ornithine</KM>
        <KM evidence="4">0.39 mM for N-methylhistidine</KM>
        <Vmax evidence="4">119.0 nmol/min/mg enzyme toward beta-alanine</Vmax>
        <Vmax evidence="4">84.1 nmol/min/mg enzyme toward gamma-aminobutyrate</Vmax>
        <Vmax evidence="4">3.3 nmol/min/mg enzyme toward L-histidine</Vmax>
        <Vmax evidence="4">3.43 nmol/min/mg enzyme toward L-lysine</Vmax>
        <Vmax evidence="4">2.54 nmol/min/mg enzyme toward L-ornithine</Vmax>
        <Vmax evidence="4">3.51 nmol/min/mg enzyme toward N-methylhistidine</Vmax>
    </kinetics>
</comment>
<comment type="subunit">
    <text evidence="4">Homotetramer.</text>
</comment>
<feature type="chain" id="PRO_0000395311" description="Carnosine synthase 1">
    <location>
        <begin position="1"/>
        <end position="930"/>
    </location>
</feature>
<feature type="domain" description="ATP-grasp" evidence="2">
    <location>
        <begin position="624"/>
        <end position="825"/>
    </location>
</feature>
<feature type="region of interest" description="Disordered" evidence="3">
    <location>
        <begin position="1"/>
        <end position="24"/>
    </location>
</feature>
<feature type="binding site" evidence="2">
    <location>
        <begin position="650"/>
        <end position="716"/>
    </location>
    <ligand>
        <name>ATP</name>
        <dbReference type="ChEBI" id="CHEBI:30616"/>
    </ligand>
</feature>
<feature type="binding site" evidence="2">
    <location>
        <position position="782"/>
    </location>
    <ligand>
        <name>Mg(2+)</name>
        <dbReference type="ChEBI" id="CHEBI:18420"/>
        <label>1</label>
    </ligand>
</feature>
<feature type="binding site" evidence="2">
    <location>
        <position position="782"/>
    </location>
    <ligand>
        <name>Mn(2+)</name>
        <dbReference type="ChEBI" id="CHEBI:29035"/>
        <label>1</label>
    </ligand>
</feature>
<feature type="binding site" evidence="2">
    <location>
        <position position="794"/>
    </location>
    <ligand>
        <name>Mg(2+)</name>
        <dbReference type="ChEBI" id="CHEBI:18420"/>
        <label>1</label>
    </ligand>
</feature>
<feature type="binding site" evidence="2">
    <location>
        <position position="794"/>
    </location>
    <ligand>
        <name>Mg(2+)</name>
        <dbReference type="ChEBI" id="CHEBI:18420"/>
        <label>2</label>
    </ligand>
</feature>
<feature type="binding site" evidence="2">
    <location>
        <position position="794"/>
    </location>
    <ligand>
        <name>Mn(2+)</name>
        <dbReference type="ChEBI" id="CHEBI:29035"/>
        <label>1</label>
    </ligand>
</feature>
<feature type="binding site" evidence="2">
    <location>
        <position position="794"/>
    </location>
    <ligand>
        <name>Mn(2+)</name>
        <dbReference type="ChEBI" id="CHEBI:29035"/>
        <label>2</label>
    </ligand>
</feature>
<feature type="binding site" evidence="2">
    <location>
        <position position="796"/>
    </location>
    <ligand>
        <name>Mg(2+)</name>
        <dbReference type="ChEBI" id="CHEBI:18420"/>
        <label>2</label>
    </ligand>
</feature>
<feature type="binding site" evidence="2">
    <location>
        <position position="796"/>
    </location>
    <ligand>
        <name>Mn(2+)</name>
        <dbReference type="ChEBI" id="CHEBI:29035"/>
        <label>2</label>
    </ligand>
</feature>
<dbReference type="EC" id="6.3.2.11" evidence="4"/>
<dbReference type="EMBL" id="GU453679">
    <property type="protein sequence ID" value="ADB91406.1"/>
    <property type="molecule type" value="mRNA"/>
</dbReference>
<dbReference type="RefSeq" id="NP_001166064.1">
    <property type="nucleotide sequence ID" value="NM_001172593.1"/>
</dbReference>
<dbReference type="SMR" id="D3KCC4"/>
<dbReference type="FunCoup" id="D3KCC4">
    <property type="interactions" value="41"/>
</dbReference>
<dbReference type="STRING" id="9031.ENSGALP00000055051"/>
<dbReference type="GeneID" id="100359387"/>
<dbReference type="KEGG" id="gga:100359387"/>
<dbReference type="CTD" id="57571"/>
<dbReference type="VEuPathDB" id="HostDB:geneid_100359387"/>
<dbReference type="InParanoid" id="D3KCC4"/>
<dbReference type="OrthoDB" id="434648at2759"/>
<dbReference type="PhylomeDB" id="D3KCC4"/>
<dbReference type="BRENDA" id="6.3.2.11">
    <property type="organism ID" value="1306"/>
</dbReference>
<dbReference type="SABIO-RK" id="D3KCC4"/>
<dbReference type="PRO" id="PR:D3KCC4"/>
<dbReference type="Proteomes" id="UP000000539">
    <property type="component" value="Unassembled WGS sequence"/>
</dbReference>
<dbReference type="GO" id="GO:0005524">
    <property type="term" value="F:ATP binding"/>
    <property type="evidence" value="ECO:0007669"/>
    <property type="project" value="UniProtKB-KW"/>
</dbReference>
<dbReference type="GO" id="GO:0016887">
    <property type="term" value="F:ATP hydrolysis activity"/>
    <property type="evidence" value="ECO:0000318"/>
    <property type="project" value="GO_Central"/>
</dbReference>
<dbReference type="GO" id="GO:0047730">
    <property type="term" value="F:carnosine synthase activity"/>
    <property type="evidence" value="ECO:0000314"/>
    <property type="project" value="UniProtKB"/>
</dbReference>
<dbReference type="GO" id="GO:0102102">
    <property type="term" value="F:homocarnosine synthase activity"/>
    <property type="evidence" value="ECO:0000314"/>
    <property type="project" value="UniProtKB"/>
</dbReference>
<dbReference type="GO" id="GO:0046872">
    <property type="term" value="F:metal ion binding"/>
    <property type="evidence" value="ECO:0007669"/>
    <property type="project" value="UniProtKB-KW"/>
</dbReference>
<dbReference type="GO" id="GO:0035499">
    <property type="term" value="P:carnosine biosynthetic process"/>
    <property type="evidence" value="ECO:0000314"/>
    <property type="project" value="UniProtKB"/>
</dbReference>
<dbReference type="FunFam" id="3.30.470.20:FF:000040">
    <property type="entry name" value="Carnosine synthase 1"/>
    <property type="match status" value="1"/>
</dbReference>
<dbReference type="FunFam" id="3.40.50.20:FF:000018">
    <property type="entry name" value="Carnosine synthase 1"/>
    <property type="match status" value="1"/>
</dbReference>
<dbReference type="Gene3D" id="3.40.50.20">
    <property type="match status" value="1"/>
</dbReference>
<dbReference type="Gene3D" id="3.30.470.20">
    <property type="entry name" value="ATP-grasp fold, B domain"/>
    <property type="match status" value="1"/>
</dbReference>
<dbReference type="InterPro" id="IPR011761">
    <property type="entry name" value="ATP-grasp"/>
</dbReference>
<dbReference type="InterPro" id="IPR041472">
    <property type="entry name" value="BL00235/CARNS1_N"/>
</dbReference>
<dbReference type="InterPro" id="IPR031046">
    <property type="entry name" value="CARNS1"/>
</dbReference>
<dbReference type="PANTHER" id="PTHR48066">
    <property type="entry name" value="CARNOSINE SYNTHASE 1"/>
    <property type="match status" value="1"/>
</dbReference>
<dbReference type="PANTHER" id="PTHR48066:SF1">
    <property type="entry name" value="CARNOSINE SYNTHASE 1"/>
    <property type="match status" value="1"/>
</dbReference>
<dbReference type="Pfam" id="PF18130">
    <property type="entry name" value="ATPgrasp_N"/>
    <property type="match status" value="1"/>
</dbReference>
<dbReference type="Pfam" id="PF15632">
    <property type="entry name" value="ATPgrasp_Ter"/>
    <property type="match status" value="1"/>
</dbReference>
<dbReference type="SUPFAM" id="SSF56059">
    <property type="entry name" value="Glutathione synthetase ATP-binding domain-like"/>
    <property type="match status" value="1"/>
</dbReference>
<dbReference type="PROSITE" id="PS50975">
    <property type="entry name" value="ATP_GRASP"/>
    <property type="match status" value="1"/>
</dbReference>
<keyword id="KW-0067">ATP-binding</keyword>
<keyword id="KW-0436">Ligase</keyword>
<keyword id="KW-0460">Magnesium</keyword>
<keyword id="KW-0464">Manganese</keyword>
<keyword id="KW-0479">Metal-binding</keyword>
<keyword id="KW-0547">Nucleotide-binding</keyword>
<keyword id="KW-1185">Reference proteome</keyword>
<protein>
    <recommendedName>
        <fullName evidence="6 7">Carnosine synthase 1</fullName>
        <ecNumber evidence="4">6.3.2.11</ecNumber>
    </recommendedName>
    <alternativeName>
        <fullName evidence="1">ATP-grasp domain-containing protein 1</fullName>
    </alternativeName>
</protein>
<accession>D3KCC4</accession>
<organism>
    <name type="scientific">Gallus gallus</name>
    <name type="common">Chicken</name>
    <dbReference type="NCBI Taxonomy" id="9031"/>
    <lineage>
        <taxon>Eukaryota</taxon>
        <taxon>Metazoa</taxon>
        <taxon>Chordata</taxon>
        <taxon>Craniata</taxon>
        <taxon>Vertebrata</taxon>
        <taxon>Euteleostomi</taxon>
        <taxon>Archelosauria</taxon>
        <taxon>Archosauria</taxon>
        <taxon>Dinosauria</taxon>
        <taxon>Saurischia</taxon>
        <taxon>Theropoda</taxon>
        <taxon>Coelurosauria</taxon>
        <taxon>Aves</taxon>
        <taxon>Neognathae</taxon>
        <taxon>Galloanserae</taxon>
        <taxon>Galliformes</taxon>
        <taxon>Phasianidae</taxon>
        <taxon>Phasianinae</taxon>
        <taxon>Gallus</taxon>
    </lineage>
</organism>
<gene>
    <name evidence="1" type="primary">CARNS1</name>
    <name evidence="1" type="synonym">ATPGD1</name>
</gene>